<keyword id="KW-0627">Porphyrin biosynthesis</keyword>
<keyword id="KW-1185">Reference proteome</keyword>
<keyword id="KW-0808">Transferase</keyword>
<accession>Q1LU25</accession>
<gene>
    <name evidence="1" type="primary">hemC</name>
    <name type="ordered locus">BCI_0061</name>
</gene>
<dbReference type="EC" id="2.5.1.61" evidence="1"/>
<dbReference type="EMBL" id="CP000238">
    <property type="protein sequence ID" value="ABF14184.1"/>
    <property type="molecule type" value="Genomic_DNA"/>
</dbReference>
<dbReference type="RefSeq" id="WP_011520272.1">
    <property type="nucleotide sequence ID" value="NC_007984.1"/>
</dbReference>
<dbReference type="SMR" id="Q1LU25"/>
<dbReference type="STRING" id="374463.BCI_0061"/>
<dbReference type="KEGG" id="bci:BCI_0061"/>
<dbReference type="HOGENOM" id="CLU_019704_0_2_6"/>
<dbReference type="OrthoDB" id="9810298at2"/>
<dbReference type="UniPathway" id="UPA00251">
    <property type="reaction ID" value="UER00319"/>
</dbReference>
<dbReference type="Proteomes" id="UP000002427">
    <property type="component" value="Chromosome"/>
</dbReference>
<dbReference type="GO" id="GO:0005737">
    <property type="term" value="C:cytoplasm"/>
    <property type="evidence" value="ECO:0007669"/>
    <property type="project" value="TreeGrafter"/>
</dbReference>
<dbReference type="GO" id="GO:0004418">
    <property type="term" value="F:hydroxymethylbilane synthase activity"/>
    <property type="evidence" value="ECO:0007669"/>
    <property type="project" value="UniProtKB-UniRule"/>
</dbReference>
<dbReference type="GO" id="GO:0006782">
    <property type="term" value="P:protoporphyrinogen IX biosynthetic process"/>
    <property type="evidence" value="ECO:0007669"/>
    <property type="project" value="UniProtKB-UniRule"/>
</dbReference>
<dbReference type="CDD" id="cd13646">
    <property type="entry name" value="PBP2_EcHMBS_like"/>
    <property type="match status" value="1"/>
</dbReference>
<dbReference type="FunFam" id="3.30.160.40:FF:000002">
    <property type="entry name" value="Porphobilinogen deaminase"/>
    <property type="match status" value="1"/>
</dbReference>
<dbReference type="FunFam" id="3.40.190.10:FF:000004">
    <property type="entry name" value="Porphobilinogen deaminase"/>
    <property type="match status" value="1"/>
</dbReference>
<dbReference type="FunFam" id="3.40.190.10:FF:000005">
    <property type="entry name" value="Porphobilinogen deaminase"/>
    <property type="match status" value="1"/>
</dbReference>
<dbReference type="Gene3D" id="3.40.190.10">
    <property type="entry name" value="Periplasmic binding protein-like II"/>
    <property type="match status" value="2"/>
</dbReference>
<dbReference type="Gene3D" id="3.30.160.40">
    <property type="entry name" value="Porphobilinogen deaminase, C-terminal domain"/>
    <property type="match status" value="1"/>
</dbReference>
<dbReference type="HAMAP" id="MF_00260">
    <property type="entry name" value="Porphobil_deam"/>
    <property type="match status" value="1"/>
</dbReference>
<dbReference type="InterPro" id="IPR000860">
    <property type="entry name" value="HemC"/>
</dbReference>
<dbReference type="InterPro" id="IPR022419">
    <property type="entry name" value="Porphobilin_deaminase_cofac_BS"/>
</dbReference>
<dbReference type="InterPro" id="IPR022417">
    <property type="entry name" value="Porphobilin_deaminase_N"/>
</dbReference>
<dbReference type="InterPro" id="IPR022418">
    <property type="entry name" value="Porphobilinogen_deaminase_C"/>
</dbReference>
<dbReference type="InterPro" id="IPR036803">
    <property type="entry name" value="Porphobilinogen_deaminase_C_sf"/>
</dbReference>
<dbReference type="NCBIfam" id="TIGR00212">
    <property type="entry name" value="hemC"/>
    <property type="match status" value="1"/>
</dbReference>
<dbReference type="PANTHER" id="PTHR11557">
    <property type="entry name" value="PORPHOBILINOGEN DEAMINASE"/>
    <property type="match status" value="1"/>
</dbReference>
<dbReference type="PANTHER" id="PTHR11557:SF0">
    <property type="entry name" value="PORPHOBILINOGEN DEAMINASE"/>
    <property type="match status" value="1"/>
</dbReference>
<dbReference type="Pfam" id="PF01379">
    <property type="entry name" value="Porphobil_deam"/>
    <property type="match status" value="1"/>
</dbReference>
<dbReference type="Pfam" id="PF03900">
    <property type="entry name" value="Porphobil_deamC"/>
    <property type="match status" value="1"/>
</dbReference>
<dbReference type="PIRSF" id="PIRSF001438">
    <property type="entry name" value="4pyrrol_synth_OHMeBilane_synth"/>
    <property type="match status" value="1"/>
</dbReference>
<dbReference type="PRINTS" id="PR00151">
    <property type="entry name" value="PORPHBDMNASE"/>
</dbReference>
<dbReference type="SUPFAM" id="SSF53850">
    <property type="entry name" value="Periplasmic binding protein-like II"/>
    <property type="match status" value="1"/>
</dbReference>
<dbReference type="SUPFAM" id="SSF54782">
    <property type="entry name" value="Porphobilinogen deaminase (hydroxymethylbilane synthase), C-terminal domain"/>
    <property type="match status" value="1"/>
</dbReference>
<dbReference type="PROSITE" id="PS00533">
    <property type="entry name" value="PORPHOBILINOGEN_DEAM"/>
    <property type="match status" value="1"/>
</dbReference>
<sequence>MLNNILKIATRQSPLAIWQANYVRNQLLSFYPTLLIELVPIVTSGDLILDKPLMKAGGKRLFIKELEQAMLERRADIAVHSMKDITISFPEGIGLAVLCAREDPRDAFISTHYASIDLLPTGAVVGTSSMRRQCQLRERRPDLVMRDLRGNIGTRLEKLDKGEYDALILAAAGLKRLDLAHRIRMIIDPTELLPAVGQGVIGIEYRLEDTHILSILAPLHHSATALRVSAERAMNAKLAGGCQVPIGSYAEIEGDQIWLRALVGSPDGSLIIRSEGRAPLSQAEILGQSIANDLLYRGAESILCRAFQVDS</sequence>
<evidence type="ECO:0000255" key="1">
    <source>
        <dbReference type="HAMAP-Rule" id="MF_00260"/>
    </source>
</evidence>
<protein>
    <recommendedName>
        <fullName evidence="1">Porphobilinogen deaminase</fullName>
        <shortName evidence="1">PBG</shortName>
        <ecNumber evidence="1">2.5.1.61</ecNumber>
    </recommendedName>
    <alternativeName>
        <fullName evidence="1">Hydroxymethylbilane synthase</fullName>
        <shortName evidence="1">HMBS</shortName>
    </alternativeName>
    <alternativeName>
        <fullName evidence="1">Pre-uroporphyrinogen synthase</fullName>
    </alternativeName>
</protein>
<proteinExistence type="inferred from homology"/>
<feature type="chain" id="PRO_0000304214" description="Porphobilinogen deaminase">
    <location>
        <begin position="1"/>
        <end position="311"/>
    </location>
</feature>
<feature type="modified residue" description="S-(dipyrrolylmethanemethyl)cysteine" evidence="1">
    <location>
        <position position="242"/>
    </location>
</feature>
<organism>
    <name type="scientific">Baumannia cicadellinicola subsp. Homalodisca coagulata</name>
    <dbReference type="NCBI Taxonomy" id="374463"/>
    <lineage>
        <taxon>Bacteria</taxon>
        <taxon>Pseudomonadati</taxon>
        <taxon>Pseudomonadota</taxon>
        <taxon>Gammaproteobacteria</taxon>
        <taxon>Candidatus Palibaumannia</taxon>
    </lineage>
</organism>
<name>HEM3_BAUCH</name>
<reference key="1">
    <citation type="journal article" date="2006" name="PLoS Biol.">
        <title>Metabolic complementarity and genomics of the dual bacterial symbiosis of sharpshooters.</title>
        <authorList>
            <person name="Wu D."/>
            <person name="Daugherty S.C."/>
            <person name="Van Aken S.E."/>
            <person name="Pai G.H."/>
            <person name="Watkins K.L."/>
            <person name="Khouri H."/>
            <person name="Tallon L.J."/>
            <person name="Zaborsky J.M."/>
            <person name="Dunbar H.E."/>
            <person name="Tran P.L."/>
            <person name="Moran N.A."/>
            <person name="Eisen J.A."/>
        </authorList>
    </citation>
    <scope>NUCLEOTIDE SEQUENCE [LARGE SCALE GENOMIC DNA]</scope>
</reference>
<comment type="function">
    <text evidence="1">Tetrapolymerization of the monopyrrole PBG into the hydroxymethylbilane pre-uroporphyrinogen in several discrete steps.</text>
</comment>
<comment type="catalytic activity">
    <reaction evidence="1">
        <text>4 porphobilinogen + H2O = hydroxymethylbilane + 4 NH4(+)</text>
        <dbReference type="Rhea" id="RHEA:13185"/>
        <dbReference type="ChEBI" id="CHEBI:15377"/>
        <dbReference type="ChEBI" id="CHEBI:28938"/>
        <dbReference type="ChEBI" id="CHEBI:57845"/>
        <dbReference type="ChEBI" id="CHEBI:58126"/>
        <dbReference type="EC" id="2.5.1.61"/>
    </reaction>
</comment>
<comment type="cofactor">
    <cofactor evidence="1">
        <name>dipyrromethane</name>
        <dbReference type="ChEBI" id="CHEBI:60342"/>
    </cofactor>
    <text evidence="1">Binds 1 dipyrromethane group covalently.</text>
</comment>
<comment type="pathway">
    <text evidence="1">Porphyrin-containing compound metabolism; protoporphyrin-IX biosynthesis; coproporphyrinogen-III from 5-aminolevulinate: step 2/4.</text>
</comment>
<comment type="subunit">
    <text evidence="1">Monomer.</text>
</comment>
<comment type="miscellaneous">
    <text evidence="1">The porphobilinogen subunits are added to the dipyrromethane group.</text>
</comment>
<comment type="similarity">
    <text evidence="1">Belongs to the HMBS family.</text>
</comment>